<keyword id="KW-0687">Ribonucleoprotein</keyword>
<keyword id="KW-0689">Ribosomal protein</keyword>
<keyword id="KW-0694">RNA-binding</keyword>
<keyword id="KW-0699">rRNA-binding</keyword>
<evidence type="ECO:0000255" key="1">
    <source>
        <dbReference type="HAMAP-Rule" id="MF_01341"/>
    </source>
</evidence>
<evidence type="ECO:0000256" key="2">
    <source>
        <dbReference type="SAM" id="MobiDB-lite"/>
    </source>
</evidence>
<evidence type="ECO:0000305" key="3"/>
<reference key="1">
    <citation type="journal article" date="2009" name="Proc. Natl. Acad. Sci. U.S.A.">
        <title>Hamiltonella defensa, genome evolution of protective bacterial endosymbiont from pathogenic ancestors.</title>
        <authorList>
            <person name="Degnan P.H."/>
            <person name="Yu Y."/>
            <person name="Sisneros N."/>
            <person name="Wing R.A."/>
            <person name="Moran N.A."/>
        </authorList>
    </citation>
    <scope>NUCLEOTIDE SEQUENCE [LARGE SCALE GENOMIC DNA]</scope>
    <source>
        <strain>5AT</strain>
    </source>
</reference>
<proteinExistence type="inferred from homology"/>
<gene>
    <name evidence="1" type="primary">rplO</name>
    <name type="ordered locus">HDEF_1847</name>
</gene>
<feature type="chain" id="PRO_1000214708" description="Large ribosomal subunit protein uL15">
    <location>
        <begin position="1"/>
        <end position="144"/>
    </location>
</feature>
<feature type="region of interest" description="Disordered" evidence="2">
    <location>
        <begin position="1"/>
        <end position="53"/>
    </location>
</feature>
<feature type="compositionally biased region" description="Gly residues" evidence="2">
    <location>
        <begin position="21"/>
        <end position="31"/>
    </location>
</feature>
<protein>
    <recommendedName>
        <fullName evidence="1">Large ribosomal subunit protein uL15</fullName>
    </recommendedName>
    <alternativeName>
        <fullName evidence="3">50S ribosomal protein L15</fullName>
    </alternativeName>
</protein>
<name>RL15_HAMD5</name>
<accession>C4K799</accession>
<organism>
    <name type="scientific">Hamiltonella defensa subsp. Acyrthosiphon pisum (strain 5AT)</name>
    <dbReference type="NCBI Taxonomy" id="572265"/>
    <lineage>
        <taxon>Bacteria</taxon>
        <taxon>Pseudomonadati</taxon>
        <taxon>Pseudomonadota</taxon>
        <taxon>Gammaproteobacteria</taxon>
        <taxon>Enterobacterales</taxon>
        <taxon>Enterobacteriaceae</taxon>
        <taxon>aphid secondary symbionts</taxon>
        <taxon>Candidatus Hamiltonella</taxon>
    </lineage>
</organism>
<dbReference type="EMBL" id="CP001277">
    <property type="protein sequence ID" value="ACQ68442.1"/>
    <property type="molecule type" value="Genomic_DNA"/>
</dbReference>
<dbReference type="RefSeq" id="WP_015874206.1">
    <property type="nucleotide sequence ID" value="NC_012751.1"/>
</dbReference>
<dbReference type="SMR" id="C4K799"/>
<dbReference type="STRING" id="572265.HDEF_1847"/>
<dbReference type="GeneID" id="66261432"/>
<dbReference type="KEGG" id="hde:HDEF_1847"/>
<dbReference type="eggNOG" id="COG0200">
    <property type="taxonomic scope" value="Bacteria"/>
</dbReference>
<dbReference type="HOGENOM" id="CLU_055188_4_2_6"/>
<dbReference type="Proteomes" id="UP000002334">
    <property type="component" value="Chromosome"/>
</dbReference>
<dbReference type="GO" id="GO:0022625">
    <property type="term" value="C:cytosolic large ribosomal subunit"/>
    <property type="evidence" value="ECO:0007669"/>
    <property type="project" value="TreeGrafter"/>
</dbReference>
<dbReference type="GO" id="GO:0019843">
    <property type="term" value="F:rRNA binding"/>
    <property type="evidence" value="ECO:0007669"/>
    <property type="project" value="UniProtKB-UniRule"/>
</dbReference>
<dbReference type="GO" id="GO:0003735">
    <property type="term" value="F:structural constituent of ribosome"/>
    <property type="evidence" value="ECO:0007669"/>
    <property type="project" value="InterPro"/>
</dbReference>
<dbReference type="GO" id="GO:0006412">
    <property type="term" value="P:translation"/>
    <property type="evidence" value="ECO:0007669"/>
    <property type="project" value="UniProtKB-UniRule"/>
</dbReference>
<dbReference type="Gene3D" id="3.100.10.10">
    <property type="match status" value="1"/>
</dbReference>
<dbReference type="HAMAP" id="MF_01341">
    <property type="entry name" value="Ribosomal_uL15"/>
    <property type="match status" value="1"/>
</dbReference>
<dbReference type="InterPro" id="IPR030878">
    <property type="entry name" value="Ribosomal_uL15"/>
</dbReference>
<dbReference type="InterPro" id="IPR021131">
    <property type="entry name" value="Ribosomal_uL15/eL18"/>
</dbReference>
<dbReference type="InterPro" id="IPR036227">
    <property type="entry name" value="Ribosomal_uL15/eL18_sf"/>
</dbReference>
<dbReference type="InterPro" id="IPR005749">
    <property type="entry name" value="Ribosomal_uL15_bac-type"/>
</dbReference>
<dbReference type="InterPro" id="IPR001196">
    <property type="entry name" value="Ribosomal_uL15_CS"/>
</dbReference>
<dbReference type="NCBIfam" id="TIGR01071">
    <property type="entry name" value="rplO_bact"/>
    <property type="match status" value="1"/>
</dbReference>
<dbReference type="PANTHER" id="PTHR12934">
    <property type="entry name" value="50S RIBOSOMAL PROTEIN L15"/>
    <property type="match status" value="1"/>
</dbReference>
<dbReference type="PANTHER" id="PTHR12934:SF11">
    <property type="entry name" value="LARGE RIBOSOMAL SUBUNIT PROTEIN UL15M"/>
    <property type="match status" value="1"/>
</dbReference>
<dbReference type="Pfam" id="PF00828">
    <property type="entry name" value="Ribosomal_L27A"/>
    <property type="match status" value="1"/>
</dbReference>
<dbReference type="SUPFAM" id="SSF52080">
    <property type="entry name" value="Ribosomal proteins L15p and L18e"/>
    <property type="match status" value="1"/>
</dbReference>
<dbReference type="PROSITE" id="PS00475">
    <property type="entry name" value="RIBOSOMAL_L15"/>
    <property type="match status" value="1"/>
</dbReference>
<comment type="function">
    <text evidence="1">Binds to the 23S rRNA.</text>
</comment>
<comment type="subunit">
    <text evidence="1">Part of the 50S ribosomal subunit.</text>
</comment>
<comment type="similarity">
    <text evidence="1">Belongs to the universal ribosomal protein uL15 family.</text>
</comment>
<sequence>MRLNTLSPAQGAKQAPKRVGRGIGSGLGKTGGRGHKGQNSRTGGGVRRGFEGGQMPLYRRLPKFGFISRKAMVTAEVRLFQLALLETDVVDINILKACKIIPYQSQYAKIILSGTIEIPVIIRGLGVTKGARAAIEAAGGKIEE</sequence>